<name>JING_AEDAE</name>
<comment type="function">
    <text evidence="2">May functionally interact with Polycomb group (PcG) and trithorax group (trxG) proteins to repress transcription.</text>
</comment>
<comment type="subcellular location">
    <subcellularLocation>
        <location evidence="2">Nucleus</location>
    </subcellularLocation>
</comment>
<comment type="similarity">
    <text evidence="2">Belongs to the AEBP2/jing C2H2-type zinc-finger family.</text>
</comment>
<reference key="1">
    <citation type="journal article" date="2007" name="Science">
        <title>Genome sequence of Aedes aegypti, a major arbovirus vector.</title>
        <authorList>
            <person name="Nene V."/>
            <person name="Wortman J.R."/>
            <person name="Lawson D."/>
            <person name="Haas B.J."/>
            <person name="Kodira C.D."/>
            <person name="Tu Z.J."/>
            <person name="Loftus B.J."/>
            <person name="Xi Z."/>
            <person name="Megy K."/>
            <person name="Grabherr M."/>
            <person name="Ren Q."/>
            <person name="Zdobnov E.M."/>
            <person name="Lobo N.F."/>
            <person name="Campbell K.S."/>
            <person name="Brown S.E."/>
            <person name="Bonaldo M.F."/>
            <person name="Zhu J."/>
            <person name="Sinkins S.P."/>
            <person name="Hogenkamp D.G."/>
            <person name="Amedeo P."/>
            <person name="Arensburger P."/>
            <person name="Atkinson P.W."/>
            <person name="Bidwell S.L."/>
            <person name="Biedler J."/>
            <person name="Birney E."/>
            <person name="Bruggner R.V."/>
            <person name="Costas J."/>
            <person name="Coy M.R."/>
            <person name="Crabtree J."/>
            <person name="Crawford M."/>
            <person name="DeBruyn B."/>
            <person name="DeCaprio D."/>
            <person name="Eiglmeier K."/>
            <person name="Eisenstadt E."/>
            <person name="El-Dorry H."/>
            <person name="Gelbart W.M."/>
            <person name="Gomes S.L."/>
            <person name="Hammond M."/>
            <person name="Hannick L.I."/>
            <person name="Hogan J.R."/>
            <person name="Holmes M.H."/>
            <person name="Jaffe D."/>
            <person name="Johnston S.J."/>
            <person name="Kennedy R.C."/>
            <person name="Koo H."/>
            <person name="Kravitz S."/>
            <person name="Kriventseva E.V."/>
            <person name="Kulp D."/>
            <person name="Labutti K."/>
            <person name="Lee E."/>
            <person name="Li S."/>
            <person name="Lovin D.D."/>
            <person name="Mao C."/>
            <person name="Mauceli E."/>
            <person name="Menck C.F."/>
            <person name="Miller J.R."/>
            <person name="Montgomery P."/>
            <person name="Mori A."/>
            <person name="Nascimento A.L."/>
            <person name="Naveira H.F."/>
            <person name="Nusbaum C."/>
            <person name="O'Leary S.B."/>
            <person name="Orvis J."/>
            <person name="Pertea M."/>
            <person name="Quesneville H."/>
            <person name="Reidenbach K.R."/>
            <person name="Rogers Y.-H.C."/>
            <person name="Roth C.W."/>
            <person name="Schneider J.R."/>
            <person name="Schatz M."/>
            <person name="Shumway M."/>
            <person name="Stanke M."/>
            <person name="Stinson E.O."/>
            <person name="Tubio J.M.C."/>
            <person name="Vanzee J.P."/>
            <person name="Verjovski-Almeida S."/>
            <person name="Werner D."/>
            <person name="White O.R."/>
            <person name="Wyder S."/>
            <person name="Zeng Q."/>
            <person name="Zhao Q."/>
            <person name="Zhao Y."/>
            <person name="Hill C.A."/>
            <person name="Raikhel A.S."/>
            <person name="Soares M.B."/>
            <person name="Knudson D.L."/>
            <person name="Lee N.H."/>
            <person name="Galagan J."/>
            <person name="Salzberg S.L."/>
            <person name="Paulsen I.T."/>
            <person name="Dimopoulos G."/>
            <person name="Collins F.H."/>
            <person name="Bruce B."/>
            <person name="Fraser-Liggett C.M."/>
            <person name="Severson D.W."/>
        </authorList>
    </citation>
    <scope>NUCLEOTIDE SEQUENCE [LARGE SCALE GENOMIC DNA]</scope>
    <source>
        <strain>LVPib12</strain>
    </source>
</reference>
<accession>Q17PR1</accession>
<gene>
    <name type="ORF">AAEL000263</name>
</gene>
<keyword id="KW-0156">Chromatin regulator</keyword>
<keyword id="KW-0479">Metal-binding</keyword>
<keyword id="KW-0539">Nucleus</keyword>
<keyword id="KW-1185">Reference proteome</keyword>
<keyword id="KW-0677">Repeat</keyword>
<keyword id="KW-0678">Repressor</keyword>
<keyword id="KW-0804">Transcription</keyword>
<keyword id="KW-0805">Transcription regulation</keyword>
<keyword id="KW-0862">Zinc</keyword>
<keyword id="KW-0863">Zinc-finger</keyword>
<feature type="chain" id="PRO_0000341594" description="Zinc finger protein jing homolog">
    <location>
        <begin position="1"/>
        <end position="1605"/>
    </location>
</feature>
<feature type="zinc finger region" description="C2H2-type 1">
    <location>
        <begin position="1260"/>
        <end position="1285"/>
    </location>
</feature>
<feature type="zinc finger region" description="C2H2-type 2; degenerate">
    <location>
        <begin position="1293"/>
        <end position="1320"/>
    </location>
</feature>
<feature type="zinc finger region" description="C2H2-type 3">
    <location>
        <begin position="1326"/>
        <end position="1350"/>
    </location>
</feature>
<feature type="region of interest" description="Disordered" evidence="1">
    <location>
        <begin position="1"/>
        <end position="28"/>
    </location>
</feature>
<feature type="region of interest" description="Disordered" evidence="1">
    <location>
        <begin position="60"/>
        <end position="117"/>
    </location>
</feature>
<feature type="region of interest" description="Disordered" evidence="1">
    <location>
        <begin position="359"/>
        <end position="388"/>
    </location>
</feature>
<feature type="region of interest" description="Disordered" evidence="1">
    <location>
        <begin position="441"/>
        <end position="468"/>
    </location>
</feature>
<feature type="region of interest" description="Disordered" evidence="1">
    <location>
        <begin position="856"/>
        <end position="877"/>
    </location>
</feature>
<feature type="region of interest" description="Disordered" evidence="1">
    <location>
        <begin position="917"/>
        <end position="947"/>
    </location>
</feature>
<feature type="region of interest" description="Disordered" evidence="1">
    <location>
        <begin position="991"/>
        <end position="1213"/>
    </location>
</feature>
<feature type="region of interest" description="Disordered" evidence="1">
    <location>
        <begin position="1352"/>
        <end position="1371"/>
    </location>
</feature>
<feature type="region of interest" description="Disordered" evidence="1">
    <location>
        <begin position="1511"/>
        <end position="1605"/>
    </location>
</feature>
<feature type="compositionally biased region" description="Polar residues" evidence="1">
    <location>
        <begin position="1"/>
        <end position="15"/>
    </location>
</feature>
<feature type="compositionally biased region" description="Low complexity" evidence="1">
    <location>
        <begin position="64"/>
        <end position="117"/>
    </location>
</feature>
<feature type="compositionally biased region" description="Polar residues" evidence="1">
    <location>
        <begin position="991"/>
        <end position="1000"/>
    </location>
</feature>
<feature type="compositionally biased region" description="Basic and acidic residues" evidence="1">
    <location>
        <begin position="1021"/>
        <end position="1030"/>
    </location>
</feature>
<feature type="compositionally biased region" description="Pro residues" evidence="1">
    <location>
        <begin position="1035"/>
        <end position="1049"/>
    </location>
</feature>
<feature type="compositionally biased region" description="Acidic residues" evidence="1">
    <location>
        <begin position="1053"/>
        <end position="1090"/>
    </location>
</feature>
<feature type="compositionally biased region" description="Acidic residues" evidence="1">
    <location>
        <begin position="1099"/>
        <end position="1110"/>
    </location>
</feature>
<feature type="compositionally biased region" description="Pro residues" evidence="1">
    <location>
        <begin position="1112"/>
        <end position="1126"/>
    </location>
</feature>
<feature type="compositionally biased region" description="Low complexity" evidence="1">
    <location>
        <begin position="1135"/>
        <end position="1149"/>
    </location>
</feature>
<feature type="compositionally biased region" description="Polar residues" evidence="1">
    <location>
        <begin position="1165"/>
        <end position="1201"/>
    </location>
</feature>
<feature type="compositionally biased region" description="Low complexity" evidence="1">
    <location>
        <begin position="1511"/>
        <end position="1537"/>
    </location>
</feature>
<feature type="compositionally biased region" description="Low complexity" evidence="1">
    <location>
        <begin position="1556"/>
        <end position="1605"/>
    </location>
</feature>
<organism>
    <name type="scientific">Aedes aegypti</name>
    <name type="common">Yellowfever mosquito</name>
    <name type="synonym">Culex aegypti</name>
    <dbReference type="NCBI Taxonomy" id="7159"/>
    <lineage>
        <taxon>Eukaryota</taxon>
        <taxon>Metazoa</taxon>
        <taxon>Ecdysozoa</taxon>
        <taxon>Arthropoda</taxon>
        <taxon>Hexapoda</taxon>
        <taxon>Insecta</taxon>
        <taxon>Pterygota</taxon>
        <taxon>Neoptera</taxon>
        <taxon>Endopterygota</taxon>
        <taxon>Diptera</taxon>
        <taxon>Nematocera</taxon>
        <taxon>Culicoidea</taxon>
        <taxon>Culicidae</taxon>
        <taxon>Culicinae</taxon>
        <taxon>Aedini</taxon>
        <taxon>Aedes</taxon>
        <taxon>Stegomyia</taxon>
    </lineage>
</organism>
<proteinExistence type="inferred from homology"/>
<sequence length="1605" mass="171290">MQHQSLSVRNSSGISGNRDENFPSVRSSKVTVKTASISAKMAPHTQGSNLTIKQQYQPHQWPWNTSNNTNATNSNNVQSNNNSSTATSNSSTNSNNSPAVNTPTTQNQSQPTTQQSNTALVAAAAAGTLSVTAVNKLKRLQPTTHSEASTNTRSNSTNTIASGAKRIRTTNVEKVNKSVGTNTTGLSGPPGLVAVGSSLTTSAANATTTKKLTQMAIVAASNTSHHHQQISTAGTTTTTITKNAKNFTASGNADLCNANKITAGRATTLKTTTASSTTTATAEAEAEITTTTELMTTTSTVLQQKSIIKTGPVKTSNAASLEKYLNLLQQQQATSITPATTLKKVERKTARIAPTVSLTRKVSHSPQGGLGVGQPKKPVTIAPRTSDPKLSINYNQQMVATTATSAISTGNQLIKQQDQQLVKSPQSTVLLTTIRIPQQQQQHQQSTQTQQQTSQNQSQPQQNQTQAQLQAQQQFKQVVQQQLQLSSPPRTPTKLGSAVFQFHPQTTTVMPNLVQIPNLVPTQPVSSAAAKLNAPVVASSTTSSPTTANLVMNNATHGLTATRLNNGTTQLYMNGAVIKLHQIQQQQQQAIGTAGQQAPTPQQSLPMDSATVSMGLNGLLTKSATLSTAASTISTNQPAHQAKAFTLHAQKPTQLYQQANTSTATAYTPQPFFMAPSGQILLNTAALPTMLTSASLQQALVQAAQANIPALHPLQPSQPQSTQLPNITAIIQQQQQQQQQQQMLPNFHQLLANIPQAVLQNLQSTTKLGQTPQFVPIPSNLFLNPQNPVYTSSPSSSSFTSPITISTSTLPSGSTTISQPLSPPPLVATVPTYTTTAKPIMNTLNNQKIIIASATSTTSSKPPPPIKPISSTEPPKLVPVQLNKPSISITPVISNPPKLVPPSAPVPKLVLSASVATKATSTTPIKDKPKPNLPMSEPPALAPASCTPPLLTAPAPLPVASVPSPVLSPRAIDNKSPPALNPLSLDCGSSNDSGIVANSSDTEDKSLTIDLCSPGSPDSTPQKKDEESRQESTPSPVPSPSPLSEPPVIPAESEPEPEPEPELEPEPEMEPEPETEPEPEVEPEPEDEPHLEEPKIDESSEAVELPELEDPQPSPPLPCELPPPPTIETDLLDTLSLPPSQKSPKSLLLEQIKLKLPDQPDDQPQESMSSDQDYSNQSPLDESSPTGSAEPSESQRSTTPVDMSPPSIETDFLNTPQMTESAKSPILSQPKTIRFPAQNGVHHNFGRKGFRRLSDGRLFGVCYWSNCDAQFDTSSKLLDHLQIQHVNTQTGPFACLWDGCKVHNKESCSRRWLERHVLSHGGSKPHKCIVAGCGMRFGSQLALEKHVNHHFNNTDNASAGKRSSDPPLPKVLRKTGKKLRYRRQPWSARRFDFFDIGVMEGLQHRLIMAGSVASARRGTVTFRGQAAGRRVTGFGAEVFVKWYPREIISDDWIPEAEVTSTREISIYELNPDQRFELEAQLKTNRKANAELLFCLHELNLKLQAEASSTSCSRSSFSSSSSSSSSSGCSSASSSLISTPIPFNSRTEPKKLRKPPKQSYQPSSSGTTSSLSSVLSSSASSLLSNENSSSSSSSSSSSSSSSSSTS</sequence>
<evidence type="ECO:0000256" key="1">
    <source>
        <dbReference type="SAM" id="MobiDB-lite"/>
    </source>
</evidence>
<evidence type="ECO:0000305" key="2"/>
<protein>
    <recommendedName>
        <fullName>Zinc finger protein jing homolog</fullName>
    </recommendedName>
</protein>
<dbReference type="EMBL" id="CH477190">
    <property type="protein sequence ID" value="EAT48690.1"/>
    <property type="molecule type" value="Genomic_DNA"/>
</dbReference>
<dbReference type="RefSeq" id="XP_001654760.1">
    <property type="nucleotide sequence ID" value="XM_001654710.1"/>
</dbReference>
<dbReference type="SMR" id="Q17PR1"/>
<dbReference type="STRING" id="7159.Q17PR1"/>
<dbReference type="PaxDb" id="7159-AAEL000263-PA"/>
<dbReference type="GeneID" id="5573733"/>
<dbReference type="KEGG" id="aag:5573733"/>
<dbReference type="CTD" id="35555"/>
<dbReference type="VEuPathDB" id="VectorBase:AAEL000263"/>
<dbReference type="eggNOG" id="KOG1721">
    <property type="taxonomic scope" value="Eukaryota"/>
</dbReference>
<dbReference type="HOGENOM" id="CLU_260362_0_0_1"/>
<dbReference type="InParanoid" id="Q17PR1"/>
<dbReference type="OMA" id="CKVHNKE"/>
<dbReference type="OrthoDB" id="9984614at2759"/>
<dbReference type="PhylomeDB" id="Q17PR1"/>
<dbReference type="Proteomes" id="UP000008820">
    <property type="component" value="Unassembled WGS sequence"/>
</dbReference>
<dbReference type="Proteomes" id="UP000682892">
    <property type="component" value="Unassembled WGS sequence"/>
</dbReference>
<dbReference type="GO" id="GO:0035098">
    <property type="term" value="C:ESC/E(Z) complex"/>
    <property type="evidence" value="ECO:0007669"/>
    <property type="project" value="TreeGrafter"/>
</dbReference>
<dbReference type="GO" id="GO:0008270">
    <property type="term" value="F:zinc ion binding"/>
    <property type="evidence" value="ECO:0007669"/>
    <property type="project" value="UniProtKB-KW"/>
</dbReference>
<dbReference type="GO" id="GO:0006325">
    <property type="term" value="P:chromatin organization"/>
    <property type="evidence" value="ECO:0007669"/>
    <property type="project" value="UniProtKB-KW"/>
</dbReference>
<dbReference type="GO" id="GO:0006357">
    <property type="term" value="P:regulation of transcription by RNA polymerase II"/>
    <property type="evidence" value="ECO:0007669"/>
    <property type="project" value="TreeGrafter"/>
</dbReference>
<dbReference type="Gene3D" id="3.30.160.60">
    <property type="entry name" value="Classic Zinc Finger"/>
    <property type="match status" value="2"/>
</dbReference>
<dbReference type="InterPro" id="IPR052130">
    <property type="entry name" value="AEBP2/jing_C2H2-ZnF"/>
</dbReference>
<dbReference type="InterPro" id="IPR036236">
    <property type="entry name" value="Znf_C2H2_sf"/>
</dbReference>
<dbReference type="InterPro" id="IPR013087">
    <property type="entry name" value="Znf_C2H2_type"/>
</dbReference>
<dbReference type="PANTHER" id="PTHR46541">
    <property type="entry name" value="ZINC FINGER PROTEIN AEBP2"/>
    <property type="match status" value="1"/>
</dbReference>
<dbReference type="PANTHER" id="PTHR46541:SF1">
    <property type="entry name" value="ZINC FINGER PROTEIN AEBP2"/>
    <property type="match status" value="1"/>
</dbReference>
<dbReference type="SMART" id="SM00355">
    <property type="entry name" value="ZnF_C2H2"/>
    <property type="match status" value="3"/>
</dbReference>
<dbReference type="SUPFAM" id="SSF57667">
    <property type="entry name" value="beta-beta-alpha zinc fingers"/>
    <property type="match status" value="2"/>
</dbReference>
<dbReference type="PROSITE" id="PS00028">
    <property type="entry name" value="ZINC_FINGER_C2H2_1"/>
    <property type="match status" value="2"/>
</dbReference>